<name>ETC1_ARATH</name>
<dbReference type="EMBL" id="AY519518">
    <property type="protein sequence ID" value="AAS09988.1"/>
    <property type="molecule type" value="mRNA"/>
</dbReference>
<dbReference type="EMBL" id="AC023628">
    <property type="protein sequence ID" value="AAF97342.1"/>
    <property type="molecule type" value="Genomic_DNA"/>
</dbReference>
<dbReference type="EMBL" id="CP002684">
    <property type="protein sequence ID" value="AEE27280.1"/>
    <property type="molecule type" value="Genomic_DNA"/>
</dbReference>
<dbReference type="PIR" id="C86144">
    <property type="entry name" value="C86144"/>
</dbReference>
<dbReference type="RefSeq" id="NP_171645.1">
    <property type="nucleotide sequence ID" value="NM_100020.4"/>
</dbReference>
<dbReference type="SMR" id="Q9LNI5"/>
<dbReference type="BioGRID" id="23336">
    <property type="interactions" value="7"/>
</dbReference>
<dbReference type="FunCoup" id="Q9LNI5">
    <property type="interactions" value="6"/>
</dbReference>
<dbReference type="IntAct" id="Q9LNI5">
    <property type="interactions" value="3"/>
</dbReference>
<dbReference type="STRING" id="3702.Q9LNI5"/>
<dbReference type="PaxDb" id="3702-AT1G01380.1"/>
<dbReference type="EnsemblPlants" id="AT1G01380.1">
    <property type="protein sequence ID" value="AT1G01380.1"/>
    <property type="gene ID" value="AT1G01380"/>
</dbReference>
<dbReference type="GeneID" id="838096"/>
<dbReference type="Gramene" id="AT1G01380.1">
    <property type="protein sequence ID" value="AT1G01380.1"/>
    <property type="gene ID" value="AT1G01380"/>
</dbReference>
<dbReference type="KEGG" id="ath:AT1G01380"/>
<dbReference type="Araport" id="AT1G01380"/>
<dbReference type="TAIR" id="AT1G01380">
    <property type="gene designation" value="ETC1"/>
</dbReference>
<dbReference type="eggNOG" id="ENOG502R1NM">
    <property type="taxonomic scope" value="Eukaryota"/>
</dbReference>
<dbReference type="HOGENOM" id="CLU_178021_1_0_1"/>
<dbReference type="InParanoid" id="Q9LNI5"/>
<dbReference type="OMA" id="MKNHRRS"/>
<dbReference type="OrthoDB" id="1077569at2759"/>
<dbReference type="PhylomeDB" id="Q9LNI5"/>
<dbReference type="PRO" id="PR:Q9LNI5"/>
<dbReference type="Proteomes" id="UP000006548">
    <property type="component" value="Chromosome 1"/>
</dbReference>
<dbReference type="ExpressionAtlas" id="Q9LNI5">
    <property type="expression patterns" value="baseline and differential"/>
</dbReference>
<dbReference type="GO" id="GO:0005634">
    <property type="term" value="C:nucleus"/>
    <property type="evidence" value="ECO:0000314"/>
    <property type="project" value="UniProtKB"/>
</dbReference>
<dbReference type="GO" id="GO:0003677">
    <property type="term" value="F:DNA binding"/>
    <property type="evidence" value="ECO:0007669"/>
    <property type="project" value="UniProtKB-KW"/>
</dbReference>
<dbReference type="GO" id="GO:0003700">
    <property type="term" value="F:DNA-binding transcription factor activity"/>
    <property type="evidence" value="ECO:0000250"/>
    <property type="project" value="TAIR"/>
</dbReference>
<dbReference type="GO" id="GO:1900033">
    <property type="term" value="P:negative regulation of trichome patterning"/>
    <property type="evidence" value="ECO:0000316"/>
    <property type="project" value="UniProtKB"/>
</dbReference>
<dbReference type="GO" id="GO:0080147">
    <property type="term" value="P:root hair cell development"/>
    <property type="evidence" value="ECO:0000316"/>
    <property type="project" value="UniProtKB"/>
</dbReference>
<dbReference type="CDD" id="cd00167">
    <property type="entry name" value="SANT"/>
    <property type="match status" value="1"/>
</dbReference>
<dbReference type="FunFam" id="1.10.10.60:FF:000160">
    <property type="entry name" value="MYB-like transcription factor"/>
    <property type="match status" value="1"/>
</dbReference>
<dbReference type="Gene3D" id="1.10.10.60">
    <property type="entry name" value="Homeodomain-like"/>
    <property type="match status" value="1"/>
</dbReference>
<dbReference type="InterPro" id="IPR009057">
    <property type="entry name" value="Homeodomain-like_sf"/>
</dbReference>
<dbReference type="InterPro" id="IPR017930">
    <property type="entry name" value="Myb_dom"/>
</dbReference>
<dbReference type="InterPro" id="IPR015495">
    <property type="entry name" value="Myb_TF_plants"/>
</dbReference>
<dbReference type="InterPro" id="IPR001005">
    <property type="entry name" value="SANT/Myb"/>
</dbReference>
<dbReference type="PANTHER" id="PTHR47998:SF93">
    <property type="entry name" value="MYB-LIKE TRANSCRIPTION FACTOR ETC1"/>
    <property type="match status" value="1"/>
</dbReference>
<dbReference type="PANTHER" id="PTHR47998">
    <property type="entry name" value="TRANSCRIPTION FACTOR MYB51-LIKE ISOFORM X1"/>
    <property type="match status" value="1"/>
</dbReference>
<dbReference type="Pfam" id="PF00249">
    <property type="entry name" value="Myb_DNA-binding"/>
    <property type="match status" value="1"/>
</dbReference>
<dbReference type="SMART" id="SM00717">
    <property type="entry name" value="SANT"/>
    <property type="match status" value="1"/>
</dbReference>
<dbReference type="SUPFAM" id="SSF46689">
    <property type="entry name" value="Homeodomain-like"/>
    <property type="match status" value="1"/>
</dbReference>
<reference key="1">
    <citation type="submission" date="2004-01" db="EMBL/GenBank/DDBJ databases">
        <title>The MYB transcription factor family in Arabidopsis: a genome-wide cloning and expression pattern analysis.</title>
        <authorList>
            <person name="Qu L."/>
            <person name="Gu H."/>
        </authorList>
    </citation>
    <scope>NUCLEOTIDE SEQUENCE [MRNA]</scope>
</reference>
<reference key="2">
    <citation type="journal article" date="2000" name="Nature">
        <title>Sequence and analysis of chromosome 1 of the plant Arabidopsis thaliana.</title>
        <authorList>
            <person name="Theologis A."/>
            <person name="Ecker J.R."/>
            <person name="Palm C.J."/>
            <person name="Federspiel N.A."/>
            <person name="Kaul S."/>
            <person name="White O."/>
            <person name="Alonso J."/>
            <person name="Altafi H."/>
            <person name="Araujo R."/>
            <person name="Bowman C.L."/>
            <person name="Brooks S.Y."/>
            <person name="Buehler E."/>
            <person name="Chan A."/>
            <person name="Chao Q."/>
            <person name="Chen H."/>
            <person name="Cheuk R.F."/>
            <person name="Chin C.W."/>
            <person name="Chung M.K."/>
            <person name="Conn L."/>
            <person name="Conway A.B."/>
            <person name="Conway A.R."/>
            <person name="Creasy T.H."/>
            <person name="Dewar K."/>
            <person name="Dunn P."/>
            <person name="Etgu P."/>
            <person name="Feldblyum T.V."/>
            <person name="Feng J.-D."/>
            <person name="Fong B."/>
            <person name="Fujii C.Y."/>
            <person name="Gill J.E."/>
            <person name="Goldsmith A.D."/>
            <person name="Haas B."/>
            <person name="Hansen N.F."/>
            <person name="Hughes B."/>
            <person name="Huizar L."/>
            <person name="Hunter J.L."/>
            <person name="Jenkins J."/>
            <person name="Johnson-Hopson C."/>
            <person name="Khan S."/>
            <person name="Khaykin E."/>
            <person name="Kim C.J."/>
            <person name="Koo H.L."/>
            <person name="Kremenetskaia I."/>
            <person name="Kurtz D.B."/>
            <person name="Kwan A."/>
            <person name="Lam B."/>
            <person name="Langin-Hooper S."/>
            <person name="Lee A."/>
            <person name="Lee J.M."/>
            <person name="Lenz C.A."/>
            <person name="Li J.H."/>
            <person name="Li Y.-P."/>
            <person name="Lin X."/>
            <person name="Liu S.X."/>
            <person name="Liu Z.A."/>
            <person name="Luros J.S."/>
            <person name="Maiti R."/>
            <person name="Marziali A."/>
            <person name="Militscher J."/>
            <person name="Miranda M."/>
            <person name="Nguyen M."/>
            <person name="Nierman W.C."/>
            <person name="Osborne B.I."/>
            <person name="Pai G."/>
            <person name="Peterson J."/>
            <person name="Pham P.K."/>
            <person name="Rizzo M."/>
            <person name="Rooney T."/>
            <person name="Rowley D."/>
            <person name="Sakano H."/>
            <person name="Salzberg S.L."/>
            <person name="Schwartz J.R."/>
            <person name="Shinn P."/>
            <person name="Southwick A.M."/>
            <person name="Sun H."/>
            <person name="Tallon L.J."/>
            <person name="Tambunga G."/>
            <person name="Toriumi M.J."/>
            <person name="Town C.D."/>
            <person name="Utterback T."/>
            <person name="Van Aken S."/>
            <person name="Vaysberg M."/>
            <person name="Vysotskaia V.S."/>
            <person name="Walker M."/>
            <person name="Wu D."/>
            <person name="Yu G."/>
            <person name="Fraser C.M."/>
            <person name="Venter J.C."/>
            <person name="Davis R.W."/>
        </authorList>
    </citation>
    <scope>NUCLEOTIDE SEQUENCE [LARGE SCALE GENOMIC DNA]</scope>
    <source>
        <strain>cv. Columbia</strain>
    </source>
</reference>
<reference key="3">
    <citation type="journal article" date="2017" name="Plant J.">
        <title>Araport11: a complete reannotation of the Arabidopsis thaliana reference genome.</title>
        <authorList>
            <person name="Cheng C.Y."/>
            <person name="Krishnakumar V."/>
            <person name="Chan A.P."/>
            <person name="Thibaud-Nissen F."/>
            <person name="Schobel S."/>
            <person name="Town C.D."/>
        </authorList>
    </citation>
    <scope>GENOME REANNOTATION</scope>
    <source>
        <strain>cv. Columbia</strain>
    </source>
</reference>
<reference key="4">
    <citation type="journal article" date="2004" name="Dev. Biol.">
        <title>The ENHANCER OF TRY AND CPC1 gene acts redundantly with TRIPTYCHON and CAPRICE in trichome and root hair cell patterning in Arabidopsis.</title>
        <authorList>
            <person name="Kirik V."/>
            <person name="Simon M."/>
            <person name="Huelskamp M."/>
            <person name="Schiefelbein J."/>
        </authorList>
    </citation>
    <scope>FUNCTION</scope>
    <scope>TISSUE SPECIFICITY</scope>
</reference>
<reference key="5">
    <citation type="journal article" date="2004" name="Plant J.">
        <title>Comparison of TRY and the closely related At1g01380 gene in controlling Arabidopsis trichome patterning.</title>
        <authorList>
            <person name="Esch J.J."/>
            <person name="Chen M.A."/>
            <person name="Hillestad M."/>
            <person name="Marks M.D."/>
        </authorList>
    </citation>
    <scope>FUNCTION</scope>
    <scope>SUBCELLULAR LOCATION</scope>
    <scope>TISSUE SPECIFICITY</scope>
</reference>
<feature type="chain" id="PRO_0000423052" description="MYB-like transcription factor ETC1">
    <location>
        <begin position="1"/>
        <end position="83"/>
    </location>
</feature>
<feature type="domain" description="Myb-like">
    <location>
        <begin position="35"/>
        <end position="72"/>
    </location>
</feature>
<comment type="function">
    <text evidence="1 2">MYB-type transcription factor involved in epidermal cell fate specification. Acts as a negative regulator of trichome development, by mediating lateral inhibition. Promotes the formation of hair developing cells in H position in root epidermis, probably by inhibiting non-hair cell formation.</text>
</comment>
<comment type="subcellular location">
    <subcellularLocation>
        <location evidence="2">Nucleus</location>
    </subcellularLocation>
</comment>
<comment type="tissue specificity">
    <text evidence="1 2">Expressed in developing trichomes and non-root hair cells.</text>
</comment>
<comment type="miscellaneous">
    <text evidence="3">Overexpression of ETC1 results in the suppression of trichomes and overproduction of root hairs, as observed for CPC, TRY, ETC2 and ETC3.</text>
</comment>
<gene>
    <name type="primary">ETC1</name>
    <name type="ordered locus">At1g01380</name>
    <name type="ORF">F6F3.18</name>
</gene>
<proteinExistence type="evidence at transcript level"/>
<accession>Q9LNI5</accession>
<sequence>MNTQRKSKHLKTNPTIVASSSEEVSSLEWEEIAMAQEEEDLICRMYKLVGERWDLIAGRIPGRTAEEIERFWVMKNHRRSQLR</sequence>
<evidence type="ECO:0000269" key="1">
    <source>
    </source>
</evidence>
<evidence type="ECO:0000269" key="2">
    <source>
    </source>
</evidence>
<evidence type="ECO:0000305" key="3">
    <source>
    </source>
</evidence>
<organism>
    <name type="scientific">Arabidopsis thaliana</name>
    <name type="common">Mouse-ear cress</name>
    <dbReference type="NCBI Taxonomy" id="3702"/>
    <lineage>
        <taxon>Eukaryota</taxon>
        <taxon>Viridiplantae</taxon>
        <taxon>Streptophyta</taxon>
        <taxon>Embryophyta</taxon>
        <taxon>Tracheophyta</taxon>
        <taxon>Spermatophyta</taxon>
        <taxon>Magnoliopsida</taxon>
        <taxon>eudicotyledons</taxon>
        <taxon>Gunneridae</taxon>
        <taxon>Pentapetalae</taxon>
        <taxon>rosids</taxon>
        <taxon>malvids</taxon>
        <taxon>Brassicales</taxon>
        <taxon>Brassicaceae</taxon>
        <taxon>Camelineae</taxon>
        <taxon>Arabidopsis</taxon>
    </lineage>
</organism>
<protein>
    <recommendedName>
        <fullName>MYB-like transcription factor ETC1</fullName>
    </recommendedName>
    <alternativeName>
        <fullName>Protein ENHANCER OF TRY AND CPC 1</fullName>
    </alternativeName>
</protein>
<keyword id="KW-0217">Developmental protein</keyword>
<keyword id="KW-0238">DNA-binding</keyword>
<keyword id="KW-0539">Nucleus</keyword>
<keyword id="KW-1185">Reference proteome</keyword>
<keyword id="KW-0804">Transcription</keyword>
<keyword id="KW-0805">Transcription regulation</keyword>